<gene>
    <name evidence="1" type="primary">psbZ</name>
</gene>
<organism>
    <name type="scientific">Thermostichus vulcanus</name>
    <name type="common">Synechococcus vulcanus</name>
    <dbReference type="NCBI Taxonomy" id="32053"/>
    <lineage>
        <taxon>Bacteria</taxon>
        <taxon>Bacillati</taxon>
        <taxon>Cyanobacteriota</taxon>
        <taxon>Cyanophyceae</taxon>
        <taxon>Thermostichales</taxon>
        <taxon>Thermostichaceae</taxon>
        <taxon>Thermostichus</taxon>
    </lineage>
</organism>
<comment type="function">
    <text evidence="1 3 5">May control the interaction of photosystem II (PSII) cores with the light-harvesting antenna, regulates electron flow through the 2 photosystem reaction centers. PSII is a light-driven water plastoquinone oxidoreductase, using light energy to abstract electrons from H(2)O, generating a proton gradient subsequently used for ATP formation.</text>
</comment>
<comment type="cofactor">
    <text evidence="2 3 4 5">PSII binds multiple chlorophylls, carotenoids and specific lipids.</text>
</comment>
<comment type="subunit">
    <text evidence="1 2 3 4 5">PSII is composed of 1 copy each of membrane proteins PsbA, PsbB, PsbC, PsbD, PsbE, PsbF, PsbH, PsbI, PsbJ, PsbK, PsbL, PsbM, PsbT, PsbX, PsbY, PsbZ, Psb30/Ycf12, peripheral proteins PsbO, CyanoQ (PsbQ), PsbU, PsbV and a large number of cofactors. It forms dimeric complexes.</text>
</comment>
<comment type="subcellular location">
    <subcellularLocation>
        <location evidence="1 2 3 4 5">Cellular thylakoid membrane</location>
        <topology evidence="1 2 3 4 5">Multi-pass membrane protein</topology>
    </subcellularLocation>
</comment>
<comment type="similarity">
    <text evidence="1 6">Belongs to the PsbZ family.</text>
</comment>
<sequence length="62" mass="6764">MTILFQLALAALVILSFVMVIGVPVAYASPQDWDRSKQLIFLGSGLWIALVLVVGVLNFFVV</sequence>
<dbReference type="PDB" id="3A0B">
    <property type="method" value="X-ray"/>
    <property type="resolution" value="3.70 A"/>
    <property type="chains" value="Z/z=1-62"/>
</dbReference>
<dbReference type="PDB" id="3A0H">
    <property type="method" value="X-ray"/>
    <property type="resolution" value="4.00 A"/>
    <property type="chains" value="Z/z=1-62"/>
</dbReference>
<dbReference type="PDB" id="3WU2">
    <property type="method" value="X-ray"/>
    <property type="resolution" value="1.90 A"/>
    <property type="chains" value="Z/z=1-62"/>
</dbReference>
<dbReference type="PDB" id="4IL6">
    <property type="method" value="X-ray"/>
    <property type="resolution" value="2.10 A"/>
    <property type="chains" value="Z/z=1-62"/>
</dbReference>
<dbReference type="PDB" id="4UB6">
    <property type="method" value="X-ray"/>
    <property type="resolution" value="1.95 A"/>
    <property type="chains" value="Z/z=1-62"/>
</dbReference>
<dbReference type="PDB" id="4UB8">
    <property type="method" value="X-ray"/>
    <property type="resolution" value="1.95 A"/>
    <property type="chains" value="Z/z=1-62"/>
</dbReference>
<dbReference type="PDB" id="5B5E">
    <property type="method" value="X-ray"/>
    <property type="resolution" value="1.87 A"/>
    <property type="chains" value="Z/z=1-62"/>
</dbReference>
<dbReference type="PDB" id="5B66">
    <property type="method" value="X-ray"/>
    <property type="resolution" value="1.85 A"/>
    <property type="chains" value="Z/z=1-62"/>
</dbReference>
<dbReference type="PDB" id="5GTH">
    <property type="method" value="X-ray"/>
    <property type="resolution" value="2.50 A"/>
    <property type="chains" value="Z/z=1-62"/>
</dbReference>
<dbReference type="PDB" id="5GTI">
    <property type="method" value="X-ray"/>
    <property type="resolution" value="2.50 A"/>
    <property type="chains" value="Z/z=1-62"/>
</dbReference>
<dbReference type="PDB" id="5V2C">
    <property type="method" value="X-ray"/>
    <property type="resolution" value="1.90 A"/>
    <property type="chains" value="Z/z=1-62"/>
</dbReference>
<dbReference type="PDB" id="5WS5">
    <property type="method" value="X-ray"/>
    <property type="resolution" value="2.35 A"/>
    <property type="chains" value="Z/z=1-62"/>
</dbReference>
<dbReference type="PDB" id="5WS6">
    <property type="method" value="X-ray"/>
    <property type="resolution" value="2.35 A"/>
    <property type="chains" value="Z/z=1-62"/>
</dbReference>
<dbReference type="PDB" id="6JLJ">
    <property type="method" value="X-ray"/>
    <property type="resolution" value="2.15 A"/>
    <property type="chains" value="Z/z=1-62"/>
</dbReference>
<dbReference type="PDB" id="6JLK">
    <property type="method" value="X-ray"/>
    <property type="resolution" value="2.15 A"/>
    <property type="chains" value="Z/z=1-62"/>
</dbReference>
<dbReference type="PDB" id="6JLL">
    <property type="method" value="X-ray"/>
    <property type="resolution" value="2.15 A"/>
    <property type="chains" value="Z/z=1-62"/>
</dbReference>
<dbReference type="PDB" id="6JLM">
    <property type="method" value="X-ray"/>
    <property type="resolution" value="2.35 A"/>
    <property type="chains" value="Z/z=1-62"/>
</dbReference>
<dbReference type="PDB" id="6JLN">
    <property type="method" value="X-ray"/>
    <property type="resolution" value="2.40 A"/>
    <property type="chains" value="Z/z=1-62"/>
</dbReference>
<dbReference type="PDB" id="6JLO">
    <property type="method" value="X-ray"/>
    <property type="resolution" value="2.40 A"/>
    <property type="chains" value="Z/z=1-62"/>
</dbReference>
<dbReference type="PDB" id="6JLP">
    <property type="method" value="X-ray"/>
    <property type="resolution" value="2.50 A"/>
    <property type="chains" value="Z/z=1-62"/>
</dbReference>
<dbReference type="PDB" id="7CJI">
    <property type="method" value="X-ray"/>
    <property type="resolution" value="2.35 A"/>
    <property type="chains" value="Z/z=1-62"/>
</dbReference>
<dbReference type="PDB" id="7CJJ">
    <property type="method" value="X-ray"/>
    <property type="resolution" value="2.40 A"/>
    <property type="chains" value="Z/z=1-62"/>
</dbReference>
<dbReference type="PDB" id="7COU">
    <property type="method" value="X-ray"/>
    <property type="resolution" value="2.25 A"/>
    <property type="chains" value="Z/z=1-62"/>
</dbReference>
<dbReference type="PDB" id="7CZL">
    <property type="method" value="EM"/>
    <property type="resolution" value="3.78 A"/>
    <property type="chains" value="Z/z=1-62"/>
</dbReference>
<dbReference type="PDB" id="7D1T">
    <property type="method" value="EM"/>
    <property type="resolution" value="1.95 A"/>
    <property type="chains" value="Z/z=1-62"/>
</dbReference>
<dbReference type="PDB" id="7D1U">
    <property type="method" value="EM"/>
    <property type="resolution" value="2.08 A"/>
    <property type="chains" value="Z/z=1-62"/>
</dbReference>
<dbReference type="PDB" id="7DXH">
    <property type="method" value="EM"/>
    <property type="resolution" value="3.14 A"/>
    <property type="chains" value="z=1-62"/>
</dbReference>
<dbReference type="PDB" id="7EDA">
    <property type="method" value="EM"/>
    <property type="resolution" value="2.78 A"/>
    <property type="chains" value="Z=1-62"/>
</dbReference>
<dbReference type="PDB" id="8GN0">
    <property type="method" value="X-ray"/>
    <property type="resolution" value="2.15 A"/>
    <property type="chains" value="Z/z=1-62"/>
</dbReference>
<dbReference type="PDB" id="8GN1">
    <property type="method" value="X-ray"/>
    <property type="resolution" value="2.10 A"/>
    <property type="chains" value="Z/z=1-62"/>
</dbReference>
<dbReference type="PDB" id="8GN2">
    <property type="method" value="X-ray"/>
    <property type="resolution" value="1.95 A"/>
    <property type="chains" value="Z/z=1-62"/>
</dbReference>
<dbReference type="PDB" id="8IR5">
    <property type="method" value="X-ray"/>
    <property type="resolution" value="2.15 A"/>
    <property type="chains" value="Z/z=1-62"/>
</dbReference>
<dbReference type="PDB" id="8IR6">
    <property type="method" value="X-ray"/>
    <property type="resolution" value="2.20 A"/>
    <property type="chains" value="Z/z=1-62"/>
</dbReference>
<dbReference type="PDB" id="8IR7">
    <property type="method" value="X-ray"/>
    <property type="resolution" value="2.25 A"/>
    <property type="chains" value="Z/z=1-62"/>
</dbReference>
<dbReference type="PDB" id="8IR8">
    <property type="method" value="X-ray"/>
    <property type="resolution" value="2.25 A"/>
    <property type="chains" value="Z/z=1-62"/>
</dbReference>
<dbReference type="PDB" id="8IR9">
    <property type="method" value="X-ray"/>
    <property type="resolution" value="2.20 A"/>
    <property type="chains" value="Z/z=1-62"/>
</dbReference>
<dbReference type="PDB" id="8IRA">
    <property type="method" value="X-ray"/>
    <property type="resolution" value="2.20 A"/>
    <property type="chains" value="Z/z=1-62"/>
</dbReference>
<dbReference type="PDB" id="8IRB">
    <property type="method" value="X-ray"/>
    <property type="resolution" value="2.30 A"/>
    <property type="chains" value="Z/z=1-62"/>
</dbReference>
<dbReference type="PDB" id="8IRC">
    <property type="method" value="X-ray"/>
    <property type="resolution" value="2.25 A"/>
    <property type="chains" value="Z/z=1-62"/>
</dbReference>
<dbReference type="PDB" id="8IRD">
    <property type="method" value="X-ray"/>
    <property type="resolution" value="2.30 A"/>
    <property type="chains" value="Z/z=1-62"/>
</dbReference>
<dbReference type="PDB" id="8IRE">
    <property type="method" value="X-ray"/>
    <property type="resolution" value="2.25 A"/>
    <property type="chains" value="Z/z=1-62"/>
</dbReference>
<dbReference type="PDB" id="8IRF">
    <property type="method" value="X-ray"/>
    <property type="resolution" value="2.25 A"/>
    <property type="chains" value="Z/z=1-62"/>
</dbReference>
<dbReference type="PDB" id="8IRG">
    <property type="method" value="X-ray"/>
    <property type="resolution" value="2.30 A"/>
    <property type="chains" value="Z/z=1-62"/>
</dbReference>
<dbReference type="PDB" id="8IRH">
    <property type="method" value="X-ray"/>
    <property type="resolution" value="2.25 A"/>
    <property type="chains" value="Z/z=1-62"/>
</dbReference>
<dbReference type="PDB" id="8IRI">
    <property type="method" value="X-ray"/>
    <property type="resolution" value="2.25 A"/>
    <property type="chains" value="Z/z=1-62"/>
</dbReference>
<dbReference type="PDBsum" id="3A0B"/>
<dbReference type="PDBsum" id="3A0H"/>
<dbReference type="PDBsum" id="3WU2"/>
<dbReference type="PDBsum" id="4IL6"/>
<dbReference type="PDBsum" id="4UB6"/>
<dbReference type="PDBsum" id="4UB8"/>
<dbReference type="PDBsum" id="5B5E"/>
<dbReference type="PDBsum" id="5B66"/>
<dbReference type="PDBsum" id="5GTH"/>
<dbReference type="PDBsum" id="5GTI"/>
<dbReference type="PDBsum" id="5V2C"/>
<dbReference type="PDBsum" id="5WS5"/>
<dbReference type="PDBsum" id="5WS6"/>
<dbReference type="PDBsum" id="6JLJ"/>
<dbReference type="PDBsum" id="6JLK"/>
<dbReference type="PDBsum" id="6JLL"/>
<dbReference type="PDBsum" id="6JLM"/>
<dbReference type="PDBsum" id="6JLN"/>
<dbReference type="PDBsum" id="6JLO"/>
<dbReference type="PDBsum" id="6JLP"/>
<dbReference type="PDBsum" id="7CJI"/>
<dbReference type="PDBsum" id="7CJJ"/>
<dbReference type="PDBsum" id="7COU"/>
<dbReference type="PDBsum" id="7CZL"/>
<dbReference type="PDBsum" id="7D1T"/>
<dbReference type="PDBsum" id="7D1U"/>
<dbReference type="PDBsum" id="7DXH"/>
<dbReference type="PDBsum" id="7EDA"/>
<dbReference type="PDBsum" id="8GN0"/>
<dbReference type="PDBsum" id="8GN1"/>
<dbReference type="PDBsum" id="8GN2"/>
<dbReference type="PDBsum" id="8IR5"/>
<dbReference type="PDBsum" id="8IR6"/>
<dbReference type="PDBsum" id="8IR7"/>
<dbReference type="PDBsum" id="8IR8"/>
<dbReference type="PDBsum" id="8IR9"/>
<dbReference type="PDBsum" id="8IRA"/>
<dbReference type="PDBsum" id="8IRB"/>
<dbReference type="PDBsum" id="8IRC"/>
<dbReference type="PDBsum" id="8IRD"/>
<dbReference type="PDBsum" id="8IRE"/>
<dbReference type="PDBsum" id="8IRF"/>
<dbReference type="PDBsum" id="8IRG"/>
<dbReference type="PDBsum" id="8IRH"/>
<dbReference type="PDBsum" id="8IRI"/>
<dbReference type="EMDB" id="EMD-30511"/>
<dbReference type="EMDB" id="EMD-30547"/>
<dbReference type="EMDB" id="EMD-30548"/>
<dbReference type="EMDB" id="EMD-30909"/>
<dbReference type="EMDB" id="EMD-31062"/>
<dbReference type="SMR" id="D0VWR5"/>
<dbReference type="DIP" id="DIP-61471N"/>
<dbReference type="IntAct" id="D0VWR5">
    <property type="interactions" value="1"/>
</dbReference>
<dbReference type="EvolutionaryTrace" id="D0VWR5"/>
<dbReference type="GO" id="GO:0009539">
    <property type="term" value="C:photosystem II reaction center"/>
    <property type="evidence" value="ECO:0007669"/>
    <property type="project" value="InterPro"/>
</dbReference>
<dbReference type="GO" id="GO:0031676">
    <property type="term" value="C:plasma membrane-derived thylakoid membrane"/>
    <property type="evidence" value="ECO:0007669"/>
    <property type="project" value="UniProtKB-SubCell"/>
</dbReference>
<dbReference type="GO" id="GO:0015979">
    <property type="term" value="P:photosynthesis"/>
    <property type="evidence" value="ECO:0007669"/>
    <property type="project" value="UniProtKB-UniRule"/>
</dbReference>
<dbReference type="GO" id="GO:0042549">
    <property type="term" value="P:photosystem II stabilization"/>
    <property type="evidence" value="ECO:0007669"/>
    <property type="project" value="InterPro"/>
</dbReference>
<dbReference type="Gene3D" id="1.10.287.740">
    <property type="entry name" value="Photosystem II PsbZ, reaction centre"/>
    <property type="match status" value="1"/>
</dbReference>
<dbReference type="HAMAP" id="MF_00644">
    <property type="entry name" value="PSII_PsbZ"/>
    <property type="match status" value="1"/>
</dbReference>
<dbReference type="InterPro" id="IPR002644">
    <property type="entry name" value="PSII_PsbZ"/>
</dbReference>
<dbReference type="InterPro" id="IPR036512">
    <property type="entry name" value="PSII_PsbZ_sf"/>
</dbReference>
<dbReference type="NCBIfam" id="TIGR03043">
    <property type="entry name" value="PS_II_psbZ"/>
    <property type="match status" value="1"/>
</dbReference>
<dbReference type="PANTHER" id="PTHR34971">
    <property type="entry name" value="PHOTOSYSTEM II REACTION CENTER PROTEIN Z"/>
    <property type="match status" value="1"/>
</dbReference>
<dbReference type="PANTHER" id="PTHR34971:SF2">
    <property type="entry name" value="PHOTOSYSTEM II REACTION CENTER PROTEIN Z"/>
    <property type="match status" value="1"/>
</dbReference>
<dbReference type="Pfam" id="PF01737">
    <property type="entry name" value="Ycf9"/>
    <property type="match status" value="1"/>
</dbReference>
<dbReference type="SUPFAM" id="SSF161055">
    <property type="entry name" value="PsbZ-like"/>
    <property type="match status" value="1"/>
</dbReference>
<protein>
    <recommendedName>
        <fullName evidence="1">Photosystem II reaction center protein Z</fullName>
        <shortName evidence="1">PSII-Z</shortName>
    </recommendedName>
</protein>
<name>PSBZ_THEVL</name>
<feature type="chain" id="PRO_0000422606" description="Photosystem II reaction center protein Z">
    <location>
        <begin position="1"/>
        <end position="62"/>
    </location>
</feature>
<feature type="topological domain" description="Lumenal" evidence="4">
    <location>
        <begin position="1"/>
        <end position="7"/>
    </location>
</feature>
<feature type="transmembrane region" description="Helical" evidence="4">
    <location>
        <begin position="8"/>
        <end position="25"/>
    </location>
</feature>
<feature type="topological domain" description="Cytoplasmic" evidence="4">
    <location>
        <begin position="26"/>
        <end position="39"/>
    </location>
</feature>
<feature type="transmembrane region" description="Helical" evidence="4">
    <location>
        <begin position="40"/>
        <end position="55"/>
    </location>
</feature>
<feature type="topological domain" description="Lumenal" evidence="4">
    <location>
        <begin position="56"/>
        <end position="62"/>
    </location>
</feature>
<feature type="helix" evidence="9">
    <location>
        <begin position="4"/>
        <end position="27"/>
    </location>
</feature>
<feature type="strand" evidence="7">
    <location>
        <begin position="30"/>
        <end position="32"/>
    </location>
</feature>
<feature type="helix" evidence="9">
    <location>
        <begin position="33"/>
        <end position="58"/>
    </location>
</feature>
<feature type="turn" evidence="8">
    <location>
        <begin position="59"/>
        <end position="61"/>
    </location>
</feature>
<accession>D0VWR5</accession>
<keyword id="KW-0002">3D-structure</keyword>
<keyword id="KW-0472">Membrane</keyword>
<keyword id="KW-0602">Photosynthesis</keyword>
<keyword id="KW-0604">Photosystem II</keyword>
<keyword id="KW-0674">Reaction center</keyword>
<keyword id="KW-0793">Thylakoid</keyword>
<keyword id="KW-0812">Transmembrane</keyword>
<keyword id="KW-1133">Transmembrane helix</keyword>
<proteinExistence type="evidence at protein level"/>
<reference key="1">
    <citation type="journal article" date="2003" name="Proc. Natl. Acad. Sci. U.S.A.">
        <title>Crystal structure of oxygen-evolving photosystem II from Thermosynechococcus vulcanus at 3.7-A resolution.</title>
        <authorList>
            <person name="Kamiya N."/>
            <person name="Shen J.-R."/>
        </authorList>
    </citation>
    <scope>X-RAY CRYSTALLOGRAPHY (3.70 ANGSTROMS) IN PHOTOSYSTEM II</scope>
    <scope>COFACTOR</scope>
    <scope>SUBUNIT</scope>
    <scope>SUBCELLULAR LOCATION</scope>
</reference>
<reference key="2">
    <citation type="journal article" date="2009" name="Proc. Natl. Acad. Sci. U.S.A.">
        <title>Location of chloride and its possible functions in oxygen-evolving photosystem II revealed by X-ray crystallography.</title>
        <authorList>
            <person name="Kawakami K."/>
            <person name="Umena Y."/>
            <person name="Kamiya N."/>
            <person name="Shen J.R."/>
        </authorList>
    </citation>
    <scope>X-RAY CRYSTALLOGRAPHY (3.70 ANGSTROMS) IN PHOTOSYSTEM II</scope>
    <scope>FUNCTION</scope>
    <scope>COFACTOR</scope>
    <scope>SUBUNIT</scope>
    <scope>SUBCELLULAR LOCATION</scope>
</reference>
<reference key="3">
    <citation type="journal article" date="2011" name="Nature">
        <title>Crystal structure of oxygen-evolving photosystem II at a resolution of 1.9 A.</title>
        <authorList>
            <person name="Umena Y."/>
            <person name="Kawakami K."/>
            <person name="Shen J.R."/>
            <person name="Kamiya N."/>
        </authorList>
    </citation>
    <scope>X-RAY CRYSTALLOGRAPHY (1.90 ANGSTROMS) IN PHOTOSYSTEM II</scope>
    <scope>COFACTOR</scope>
    <scope>SUBUNIT</scope>
    <scope>SUBCELLULAR LOCATION</scope>
    <scope>TOPOLOGY</scope>
</reference>
<reference key="4">
    <citation type="journal article" date="2013" name="Proc. Natl. Acad. Sci. U.S.A.">
        <title>Structure of Sr-substituted photosystem II at 2.1 A resolution and its implications in the mechanism of water oxidation.</title>
        <authorList>
            <person name="Koua F.H."/>
            <person name="Umena Y."/>
            <person name="Kawakami K."/>
            <person name="Shen J.R."/>
        </authorList>
    </citation>
    <scope>X-RAY CRYSTALLOGRAPHY (2.1 ANGSTROMS) IN PHOTOSYSTEM II</scope>
    <scope>FUNCTION</scope>
    <scope>COFACTOR</scope>
    <scope>SUBUNIT</scope>
    <scope>SUBCELLULAR LOCATION</scope>
</reference>
<evidence type="ECO:0000255" key="1">
    <source>
        <dbReference type="HAMAP-Rule" id="MF_00644"/>
    </source>
</evidence>
<evidence type="ECO:0000269" key="2">
    <source>
    </source>
</evidence>
<evidence type="ECO:0000269" key="3">
    <source>
    </source>
</evidence>
<evidence type="ECO:0000269" key="4">
    <source>
    </source>
</evidence>
<evidence type="ECO:0000269" key="5">
    <source>
    </source>
</evidence>
<evidence type="ECO:0000305" key="6"/>
<evidence type="ECO:0007829" key="7">
    <source>
        <dbReference type="PDB" id="4IL6"/>
    </source>
</evidence>
<evidence type="ECO:0007829" key="8">
    <source>
        <dbReference type="PDB" id="4UB6"/>
    </source>
</evidence>
<evidence type="ECO:0007829" key="9">
    <source>
        <dbReference type="PDB" id="5B66"/>
    </source>
</evidence>